<feature type="chain" id="PRO_1000021111" description="4-hydroxy-3-methylbut-2-enyl diphosphate reductase">
    <location>
        <begin position="1"/>
        <end position="306"/>
    </location>
</feature>
<feature type="active site" description="Proton donor" evidence="1">
    <location>
        <position position="126"/>
    </location>
</feature>
<feature type="binding site" evidence="1">
    <location>
        <position position="12"/>
    </location>
    <ligand>
        <name>[4Fe-4S] cluster</name>
        <dbReference type="ChEBI" id="CHEBI:49883"/>
    </ligand>
</feature>
<feature type="binding site" evidence="1">
    <location>
        <position position="41"/>
    </location>
    <ligand>
        <name>(2E)-4-hydroxy-3-methylbut-2-enyl diphosphate</name>
        <dbReference type="ChEBI" id="CHEBI:128753"/>
    </ligand>
</feature>
<feature type="binding site" evidence="1">
    <location>
        <position position="41"/>
    </location>
    <ligand>
        <name>dimethylallyl diphosphate</name>
        <dbReference type="ChEBI" id="CHEBI:57623"/>
    </ligand>
</feature>
<feature type="binding site" evidence="1">
    <location>
        <position position="41"/>
    </location>
    <ligand>
        <name>isopentenyl diphosphate</name>
        <dbReference type="ChEBI" id="CHEBI:128769"/>
    </ligand>
</feature>
<feature type="binding site" evidence="1">
    <location>
        <position position="74"/>
    </location>
    <ligand>
        <name>(2E)-4-hydroxy-3-methylbut-2-enyl diphosphate</name>
        <dbReference type="ChEBI" id="CHEBI:128753"/>
    </ligand>
</feature>
<feature type="binding site" evidence="1">
    <location>
        <position position="74"/>
    </location>
    <ligand>
        <name>dimethylallyl diphosphate</name>
        <dbReference type="ChEBI" id="CHEBI:57623"/>
    </ligand>
</feature>
<feature type="binding site" evidence="1">
    <location>
        <position position="74"/>
    </location>
    <ligand>
        <name>isopentenyl diphosphate</name>
        <dbReference type="ChEBI" id="CHEBI:128769"/>
    </ligand>
</feature>
<feature type="binding site" evidence="1">
    <location>
        <position position="96"/>
    </location>
    <ligand>
        <name>[4Fe-4S] cluster</name>
        <dbReference type="ChEBI" id="CHEBI:49883"/>
    </ligand>
</feature>
<feature type="binding site" evidence="1">
    <location>
        <position position="124"/>
    </location>
    <ligand>
        <name>(2E)-4-hydroxy-3-methylbut-2-enyl diphosphate</name>
        <dbReference type="ChEBI" id="CHEBI:128753"/>
    </ligand>
</feature>
<feature type="binding site" evidence="1">
    <location>
        <position position="124"/>
    </location>
    <ligand>
        <name>dimethylallyl diphosphate</name>
        <dbReference type="ChEBI" id="CHEBI:57623"/>
    </ligand>
</feature>
<feature type="binding site" evidence="1">
    <location>
        <position position="124"/>
    </location>
    <ligand>
        <name>isopentenyl diphosphate</name>
        <dbReference type="ChEBI" id="CHEBI:128769"/>
    </ligand>
</feature>
<feature type="binding site" evidence="1">
    <location>
        <position position="164"/>
    </location>
    <ligand>
        <name>(2E)-4-hydroxy-3-methylbut-2-enyl diphosphate</name>
        <dbReference type="ChEBI" id="CHEBI:128753"/>
    </ligand>
</feature>
<feature type="binding site" evidence="1">
    <location>
        <position position="194"/>
    </location>
    <ligand>
        <name>[4Fe-4S] cluster</name>
        <dbReference type="ChEBI" id="CHEBI:49883"/>
    </ligand>
</feature>
<feature type="binding site" evidence="1">
    <location>
        <position position="222"/>
    </location>
    <ligand>
        <name>(2E)-4-hydroxy-3-methylbut-2-enyl diphosphate</name>
        <dbReference type="ChEBI" id="CHEBI:128753"/>
    </ligand>
</feature>
<feature type="binding site" evidence="1">
    <location>
        <position position="222"/>
    </location>
    <ligand>
        <name>dimethylallyl diphosphate</name>
        <dbReference type="ChEBI" id="CHEBI:57623"/>
    </ligand>
</feature>
<feature type="binding site" evidence="1">
    <location>
        <position position="222"/>
    </location>
    <ligand>
        <name>isopentenyl diphosphate</name>
        <dbReference type="ChEBI" id="CHEBI:128769"/>
    </ligand>
</feature>
<feature type="binding site" evidence="1">
    <location>
        <position position="223"/>
    </location>
    <ligand>
        <name>(2E)-4-hydroxy-3-methylbut-2-enyl diphosphate</name>
        <dbReference type="ChEBI" id="CHEBI:128753"/>
    </ligand>
</feature>
<feature type="binding site" evidence="1">
    <location>
        <position position="223"/>
    </location>
    <ligand>
        <name>dimethylallyl diphosphate</name>
        <dbReference type="ChEBI" id="CHEBI:57623"/>
    </ligand>
</feature>
<feature type="binding site" evidence="1">
    <location>
        <position position="223"/>
    </location>
    <ligand>
        <name>isopentenyl diphosphate</name>
        <dbReference type="ChEBI" id="CHEBI:128769"/>
    </ligand>
</feature>
<feature type="binding site" evidence="1">
    <location>
        <position position="224"/>
    </location>
    <ligand>
        <name>(2E)-4-hydroxy-3-methylbut-2-enyl diphosphate</name>
        <dbReference type="ChEBI" id="CHEBI:128753"/>
    </ligand>
</feature>
<feature type="binding site" evidence="1">
    <location>
        <position position="224"/>
    </location>
    <ligand>
        <name>dimethylallyl diphosphate</name>
        <dbReference type="ChEBI" id="CHEBI:57623"/>
    </ligand>
</feature>
<feature type="binding site" evidence="1">
    <location>
        <position position="224"/>
    </location>
    <ligand>
        <name>isopentenyl diphosphate</name>
        <dbReference type="ChEBI" id="CHEBI:128769"/>
    </ligand>
</feature>
<feature type="binding site" evidence="1">
    <location>
        <position position="266"/>
    </location>
    <ligand>
        <name>(2E)-4-hydroxy-3-methylbut-2-enyl diphosphate</name>
        <dbReference type="ChEBI" id="CHEBI:128753"/>
    </ligand>
</feature>
<feature type="binding site" evidence="1">
    <location>
        <position position="266"/>
    </location>
    <ligand>
        <name>dimethylallyl diphosphate</name>
        <dbReference type="ChEBI" id="CHEBI:57623"/>
    </ligand>
</feature>
<feature type="binding site" evidence="1">
    <location>
        <position position="266"/>
    </location>
    <ligand>
        <name>isopentenyl diphosphate</name>
        <dbReference type="ChEBI" id="CHEBI:128769"/>
    </ligand>
</feature>
<organism>
    <name type="scientific">Dechloromonas aromatica (strain RCB)</name>
    <dbReference type="NCBI Taxonomy" id="159087"/>
    <lineage>
        <taxon>Bacteria</taxon>
        <taxon>Pseudomonadati</taxon>
        <taxon>Pseudomonadota</taxon>
        <taxon>Betaproteobacteria</taxon>
        <taxon>Rhodocyclales</taxon>
        <taxon>Azonexaceae</taxon>
        <taxon>Dechloromonas</taxon>
    </lineage>
</organism>
<protein>
    <recommendedName>
        <fullName evidence="1">4-hydroxy-3-methylbut-2-enyl diphosphate reductase</fullName>
        <shortName evidence="1">HMBPP reductase</shortName>
        <ecNumber evidence="1">1.17.7.4</ecNumber>
    </recommendedName>
</protein>
<gene>
    <name evidence="1" type="primary">ispH</name>
    <name type="ordered locus">Daro_3043</name>
</gene>
<accession>Q47BK8</accession>
<sequence>MEIILANPRGFCAGVERAIAIVERALEKFGAPIYVRHEVVHNKFVCDDLRAKGAVFVEELDEVPAGSTVIFSAHGVSKAVREDAEARGLKVFDATCPLVTKVHVEVGKMRNQTREVVMIGHKGHPEVEGTMGQSQGGMYLVETADEVAQLQVSDPLHLSFVTQTTLSVDDATVVIDALKQRFPEIQGPKKDDICYATQNRQDAVKELAGKCDLVLVVGSPNSSNSRRLKEVAVGRNVMAFLIDDAEEIEESWLRGKQHIGVTAGASAPETLVERVVMHIQALTGASVTHLKGIEEGISFPLPKDLN</sequence>
<evidence type="ECO:0000255" key="1">
    <source>
        <dbReference type="HAMAP-Rule" id="MF_00191"/>
    </source>
</evidence>
<comment type="function">
    <text evidence="1">Catalyzes the conversion of 1-hydroxy-2-methyl-2-(E)-butenyl 4-diphosphate (HMBPP) into a mixture of isopentenyl diphosphate (IPP) and dimethylallyl diphosphate (DMAPP). Acts in the terminal step of the DOXP/MEP pathway for isoprenoid precursor biosynthesis.</text>
</comment>
<comment type="catalytic activity">
    <reaction evidence="1">
        <text>isopentenyl diphosphate + 2 oxidized [2Fe-2S]-[ferredoxin] + H2O = (2E)-4-hydroxy-3-methylbut-2-enyl diphosphate + 2 reduced [2Fe-2S]-[ferredoxin] + 2 H(+)</text>
        <dbReference type="Rhea" id="RHEA:24488"/>
        <dbReference type="Rhea" id="RHEA-COMP:10000"/>
        <dbReference type="Rhea" id="RHEA-COMP:10001"/>
        <dbReference type="ChEBI" id="CHEBI:15377"/>
        <dbReference type="ChEBI" id="CHEBI:15378"/>
        <dbReference type="ChEBI" id="CHEBI:33737"/>
        <dbReference type="ChEBI" id="CHEBI:33738"/>
        <dbReference type="ChEBI" id="CHEBI:128753"/>
        <dbReference type="ChEBI" id="CHEBI:128769"/>
        <dbReference type="EC" id="1.17.7.4"/>
    </reaction>
</comment>
<comment type="catalytic activity">
    <reaction evidence="1">
        <text>dimethylallyl diphosphate + 2 oxidized [2Fe-2S]-[ferredoxin] + H2O = (2E)-4-hydroxy-3-methylbut-2-enyl diphosphate + 2 reduced [2Fe-2S]-[ferredoxin] + 2 H(+)</text>
        <dbReference type="Rhea" id="RHEA:24825"/>
        <dbReference type="Rhea" id="RHEA-COMP:10000"/>
        <dbReference type="Rhea" id="RHEA-COMP:10001"/>
        <dbReference type="ChEBI" id="CHEBI:15377"/>
        <dbReference type="ChEBI" id="CHEBI:15378"/>
        <dbReference type="ChEBI" id="CHEBI:33737"/>
        <dbReference type="ChEBI" id="CHEBI:33738"/>
        <dbReference type="ChEBI" id="CHEBI:57623"/>
        <dbReference type="ChEBI" id="CHEBI:128753"/>
        <dbReference type="EC" id="1.17.7.4"/>
    </reaction>
</comment>
<comment type="cofactor">
    <cofactor evidence="1">
        <name>[4Fe-4S] cluster</name>
        <dbReference type="ChEBI" id="CHEBI:49883"/>
    </cofactor>
    <text evidence="1">Binds 1 [4Fe-4S] cluster per subunit.</text>
</comment>
<comment type="pathway">
    <text evidence="1">Isoprenoid biosynthesis; dimethylallyl diphosphate biosynthesis; dimethylallyl diphosphate from (2E)-4-hydroxy-3-methylbutenyl diphosphate: step 1/1.</text>
</comment>
<comment type="pathway">
    <text evidence="1">Isoprenoid biosynthesis; isopentenyl diphosphate biosynthesis via DXP pathway; isopentenyl diphosphate from 1-deoxy-D-xylulose 5-phosphate: step 6/6.</text>
</comment>
<comment type="similarity">
    <text evidence="1">Belongs to the IspH family.</text>
</comment>
<reference key="1">
    <citation type="journal article" date="2009" name="BMC Genomics">
        <title>Metabolic analysis of the soil microbe Dechloromonas aromatica str. RCB: indications of a surprisingly complex life-style and cryptic anaerobic pathways for aromatic degradation.</title>
        <authorList>
            <person name="Salinero K.K."/>
            <person name="Keller K."/>
            <person name="Feil W.S."/>
            <person name="Feil H."/>
            <person name="Trong S."/>
            <person name="Di Bartolo G."/>
            <person name="Lapidus A."/>
        </authorList>
    </citation>
    <scope>NUCLEOTIDE SEQUENCE [LARGE SCALE GENOMIC DNA]</scope>
    <source>
        <strain>RCB</strain>
    </source>
</reference>
<dbReference type="EC" id="1.17.7.4" evidence="1"/>
<dbReference type="EMBL" id="CP000089">
    <property type="protein sequence ID" value="AAZ47773.1"/>
    <property type="molecule type" value="Genomic_DNA"/>
</dbReference>
<dbReference type="SMR" id="Q47BK8"/>
<dbReference type="STRING" id="159087.Daro_3043"/>
<dbReference type="KEGG" id="dar:Daro_3043"/>
<dbReference type="eggNOG" id="COG0761">
    <property type="taxonomic scope" value="Bacteria"/>
</dbReference>
<dbReference type="HOGENOM" id="CLU_027486_1_1_4"/>
<dbReference type="OrthoDB" id="9804068at2"/>
<dbReference type="UniPathway" id="UPA00056">
    <property type="reaction ID" value="UER00097"/>
</dbReference>
<dbReference type="UniPathway" id="UPA00059">
    <property type="reaction ID" value="UER00105"/>
</dbReference>
<dbReference type="GO" id="GO:0051539">
    <property type="term" value="F:4 iron, 4 sulfur cluster binding"/>
    <property type="evidence" value="ECO:0007669"/>
    <property type="project" value="UniProtKB-UniRule"/>
</dbReference>
<dbReference type="GO" id="GO:0051745">
    <property type="term" value="F:4-hydroxy-3-methylbut-2-enyl diphosphate reductase activity"/>
    <property type="evidence" value="ECO:0007669"/>
    <property type="project" value="UniProtKB-UniRule"/>
</dbReference>
<dbReference type="GO" id="GO:0046872">
    <property type="term" value="F:metal ion binding"/>
    <property type="evidence" value="ECO:0007669"/>
    <property type="project" value="UniProtKB-KW"/>
</dbReference>
<dbReference type="GO" id="GO:0050992">
    <property type="term" value="P:dimethylallyl diphosphate biosynthetic process"/>
    <property type="evidence" value="ECO:0007669"/>
    <property type="project" value="UniProtKB-UniRule"/>
</dbReference>
<dbReference type="GO" id="GO:0019288">
    <property type="term" value="P:isopentenyl diphosphate biosynthetic process, methylerythritol 4-phosphate pathway"/>
    <property type="evidence" value="ECO:0007669"/>
    <property type="project" value="UniProtKB-UniRule"/>
</dbReference>
<dbReference type="GO" id="GO:0016114">
    <property type="term" value="P:terpenoid biosynthetic process"/>
    <property type="evidence" value="ECO:0007669"/>
    <property type="project" value="UniProtKB-UniRule"/>
</dbReference>
<dbReference type="CDD" id="cd13944">
    <property type="entry name" value="lytB_ispH"/>
    <property type="match status" value="1"/>
</dbReference>
<dbReference type="Gene3D" id="3.40.50.11270">
    <property type="match status" value="1"/>
</dbReference>
<dbReference type="Gene3D" id="3.40.1010.20">
    <property type="entry name" value="4-hydroxy-3-methylbut-2-enyl diphosphate reductase, catalytic domain"/>
    <property type="match status" value="2"/>
</dbReference>
<dbReference type="HAMAP" id="MF_00191">
    <property type="entry name" value="IspH"/>
    <property type="match status" value="1"/>
</dbReference>
<dbReference type="InterPro" id="IPR003451">
    <property type="entry name" value="LytB/IspH"/>
</dbReference>
<dbReference type="NCBIfam" id="TIGR00216">
    <property type="entry name" value="ispH_lytB"/>
    <property type="match status" value="1"/>
</dbReference>
<dbReference type="NCBIfam" id="NF002188">
    <property type="entry name" value="PRK01045.1-2"/>
    <property type="match status" value="1"/>
</dbReference>
<dbReference type="NCBIfam" id="NF002190">
    <property type="entry name" value="PRK01045.1-4"/>
    <property type="match status" value="1"/>
</dbReference>
<dbReference type="PANTHER" id="PTHR30426">
    <property type="entry name" value="4-HYDROXY-3-METHYLBUT-2-ENYL DIPHOSPHATE REDUCTASE"/>
    <property type="match status" value="1"/>
</dbReference>
<dbReference type="PANTHER" id="PTHR30426:SF0">
    <property type="entry name" value="4-HYDROXY-3-METHYLBUT-2-ENYL DIPHOSPHATE REDUCTASE"/>
    <property type="match status" value="1"/>
</dbReference>
<dbReference type="Pfam" id="PF02401">
    <property type="entry name" value="LYTB"/>
    <property type="match status" value="1"/>
</dbReference>
<keyword id="KW-0004">4Fe-4S</keyword>
<keyword id="KW-0408">Iron</keyword>
<keyword id="KW-0411">Iron-sulfur</keyword>
<keyword id="KW-0414">Isoprene biosynthesis</keyword>
<keyword id="KW-0479">Metal-binding</keyword>
<keyword id="KW-0560">Oxidoreductase</keyword>
<proteinExistence type="inferred from homology"/>
<name>ISPH_DECAR</name>